<name>RPOZ_SYNC1</name>
<organism>
    <name type="scientific">Syntrophotalea carbinolica (strain DSM 2380 / NBRC 103641 / GraBd1)</name>
    <name type="common">Pelobacter carbinolicus</name>
    <dbReference type="NCBI Taxonomy" id="338963"/>
    <lineage>
        <taxon>Bacteria</taxon>
        <taxon>Pseudomonadati</taxon>
        <taxon>Thermodesulfobacteriota</taxon>
        <taxon>Desulfuromonadia</taxon>
        <taxon>Desulfuromonadales</taxon>
        <taxon>Syntrophotaleaceae</taxon>
        <taxon>Syntrophotalea</taxon>
    </lineage>
</organism>
<comment type="function">
    <text evidence="1">Promotes RNA polymerase assembly. Latches the N- and C-terminal regions of the beta' subunit thereby facilitating its interaction with the beta and alpha subunits.</text>
</comment>
<comment type="catalytic activity">
    <reaction evidence="1">
        <text>RNA(n) + a ribonucleoside 5'-triphosphate = RNA(n+1) + diphosphate</text>
        <dbReference type="Rhea" id="RHEA:21248"/>
        <dbReference type="Rhea" id="RHEA-COMP:14527"/>
        <dbReference type="Rhea" id="RHEA-COMP:17342"/>
        <dbReference type="ChEBI" id="CHEBI:33019"/>
        <dbReference type="ChEBI" id="CHEBI:61557"/>
        <dbReference type="ChEBI" id="CHEBI:140395"/>
        <dbReference type="EC" id="2.7.7.6"/>
    </reaction>
</comment>
<comment type="subunit">
    <text evidence="1">The RNAP catalytic core consists of 2 alpha, 1 beta, 1 beta' and 1 omega subunit. When a sigma factor is associated with the core the holoenzyme is formed, which can initiate transcription.</text>
</comment>
<comment type="similarity">
    <text evidence="1">Belongs to the RNA polymerase subunit omega family.</text>
</comment>
<reference key="1">
    <citation type="submission" date="2005-10" db="EMBL/GenBank/DDBJ databases">
        <title>Complete sequence of Pelobacter carbinolicus DSM 2380.</title>
        <authorList>
            <person name="Copeland A."/>
            <person name="Lucas S."/>
            <person name="Lapidus A."/>
            <person name="Barry K."/>
            <person name="Detter J.C."/>
            <person name="Glavina T."/>
            <person name="Hammon N."/>
            <person name="Israni S."/>
            <person name="Pitluck S."/>
            <person name="Chertkov O."/>
            <person name="Schmutz J."/>
            <person name="Larimer F."/>
            <person name="Land M."/>
            <person name="Kyrpides N."/>
            <person name="Ivanova N."/>
            <person name="Richardson P."/>
        </authorList>
    </citation>
    <scope>NUCLEOTIDE SEQUENCE [LARGE SCALE GENOMIC DNA]</scope>
    <source>
        <strain>DSM 2380 / NBRC 103641 / GraBd1</strain>
    </source>
</reference>
<sequence>MARITVEDCLQQIPNRFLLVMVAAKRTKQLYKGGQPLIENKSNNKRVVHCLREIAAGKVDYEIPARKA</sequence>
<accession>Q3A522</accession>
<proteinExistence type="inferred from homology"/>
<keyword id="KW-0240">DNA-directed RNA polymerase</keyword>
<keyword id="KW-0548">Nucleotidyltransferase</keyword>
<keyword id="KW-1185">Reference proteome</keyword>
<keyword id="KW-0804">Transcription</keyword>
<keyword id="KW-0808">Transferase</keyword>
<evidence type="ECO:0000255" key="1">
    <source>
        <dbReference type="HAMAP-Rule" id="MF_00366"/>
    </source>
</evidence>
<dbReference type="EC" id="2.7.7.6" evidence="1"/>
<dbReference type="EMBL" id="CP000142">
    <property type="protein sequence ID" value="ABA88535.1"/>
    <property type="molecule type" value="Genomic_DNA"/>
</dbReference>
<dbReference type="RefSeq" id="WP_011341010.1">
    <property type="nucleotide sequence ID" value="NC_007498.2"/>
</dbReference>
<dbReference type="SMR" id="Q3A522"/>
<dbReference type="STRING" id="338963.Pcar_1286"/>
<dbReference type="KEGG" id="pca:Pcar_1286"/>
<dbReference type="eggNOG" id="COG1758">
    <property type="taxonomic scope" value="Bacteria"/>
</dbReference>
<dbReference type="HOGENOM" id="CLU_125406_5_1_7"/>
<dbReference type="OrthoDB" id="9796300at2"/>
<dbReference type="Proteomes" id="UP000002534">
    <property type="component" value="Chromosome"/>
</dbReference>
<dbReference type="GO" id="GO:0000428">
    <property type="term" value="C:DNA-directed RNA polymerase complex"/>
    <property type="evidence" value="ECO:0007669"/>
    <property type="project" value="UniProtKB-KW"/>
</dbReference>
<dbReference type="GO" id="GO:0003677">
    <property type="term" value="F:DNA binding"/>
    <property type="evidence" value="ECO:0007669"/>
    <property type="project" value="UniProtKB-UniRule"/>
</dbReference>
<dbReference type="GO" id="GO:0003899">
    <property type="term" value="F:DNA-directed RNA polymerase activity"/>
    <property type="evidence" value="ECO:0007669"/>
    <property type="project" value="UniProtKB-UniRule"/>
</dbReference>
<dbReference type="GO" id="GO:0006351">
    <property type="term" value="P:DNA-templated transcription"/>
    <property type="evidence" value="ECO:0007669"/>
    <property type="project" value="UniProtKB-UniRule"/>
</dbReference>
<dbReference type="Gene3D" id="3.90.940.10">
    <property type="match status" value="1"/>
</dbReference>
<dbReference type="HAMAP" id="MF_00366">
    <property type="entry name" value="RNApol_bact_RpoZ"/>
    <property type="match status" value="1"/>
</dbReference>
<dbReference type="InterPro" id="IPR003716">
    <property type="entry name" value="DNA-dir_RNA_pol_omega"/>
</dbReference>
<dbReference type="InterPro" id="IPR006110">
    <property type="entry name" value="Pol_omega/Rpo6/RPB6"/>
</dbReference>
<dbReference type="InterPro" id="IPR036161">
    <property type="entry name" value="RPB6/omega-like_sf"/>
</dbReference>
<dbReference type="NCBIfam" id="TIGR00690">
    <property type="entry name" value="rpoZ"/>
    <property type="match status" value="1"/>
</dbReference>
<dbReference type="PANTHER" id="PTHR34476">
    <property type="entry name" value="DNA-DIRECTED RNA POLYMERASE SUBUNIT OMEGA"/>
    <property type="match status" value="1"/>
</dbReference>
<dbReference type="PANTHER" id="PTHR34476:SF1">
    <property type="entry name" value="DNA-DIRECTED RNA POLYMERASE SUBUNIT OMEGA"/>
    <property type="match status" value="1"/>
</dbReference>
<dbReference type="Pfam" id="PF01192">
    <property type="entry name" value="RNA_pol_Rpb6"/>
    <property type="match status" value="1"/>
</dbReference>
<dbReference type="SMART" id="SM01409">
    <property type="entry name" value="RNA_pol_Rpb6"/>
    <property type="match status" value="1"/>
</dbReference>
<dbReference type="SUPFAM" id="SSF63562">
    <property type="entry name" value="RPB6/omega subunit-like"/>
    <property type="match status" value="1"/>
</dbReference>
<protein>
    <recommendedName>
        <fullName evidence="1">DNA-directed RNA polymerase subunit omega</fullName>
        <shortName evidence="1">RNAP omega subunit</shortName>
        <ecNumber evidence="1">2.7.7.6</ecNumber>
    </recommendedName>
    <alternativeName>
        <fullName evidence="1">RNA polymerase omega subunit</fullName>
    </alternativeName>
    <alternativeName>
        <fullName evidence="1">Transcriptase subunit omega</fullName>
    </alternativeName>
</protein>
<gene>
    <name evidence="1" type="primary">rpoZ</name>
    <name type="ordered locus">Pcar_1286</name>
</gene>
<feature type="chain" id="PRO_0000237484" description="DNA-directed RNA polymerase subunit omega">
    <location>
        <begin position="1"/>
        <end position="68"/>
    </location>
</feature>